<name>TRPB_ECO7I</name>
<dbReference type="EC" id="4.2.1.20" evidence="1"/>
<dbReference type="EMBL" id="CU928164">
    <property type="protein sequence ID" value="CAR17729.1"/>
    <property type="molecule type" value="Genomic_DNA"/>
</dbReference>
<dbReference type="RefSeq" id="WP_000209513.1">
    <property type="nucleotide sequence ID" value="NC_011750.1"/>
</dbReference>
<dbReference type="RefSeq" id="YP_002407597.1">
    <property type="nucleotide sequence ID" value="NC_011750.1"/>
</dbReference>
<dbReference type="SMR" id="B7NVN1"/>
<dbReference type="STRING" id="585057.ECIAI39_1598"/>
<dbReference type="GeneID" id="75171375"/>
<dbReference type="KEGG" id="ect:ECIAI39_1598"/>
<dbReference type="PATRIC" id="fig|585057.6.peg.1669"/>
<dbReference type="HOGENOM" id="CLU_016734_3_1_6"/>
<dbReference type="UniPathway" id="UPA00035">
    <property type="reaction ID" value="UER00044"/>
</dbReference>
<dbReference type="Proteomes" id="UP000000749">
    <property type="component" value="Chromosome"/>
</dbReference>
<dbReference type="GO" id="GO:0005737">
    <property type="term" value="C:cytoplasm"/>
    <property type="evidence" value="ECO:0007669"/>
    <property type="project" value="TreeGrafter"/>
</dbReference>
<dbReference type="GO" id="GO:0004834">
    <property type="term" value="F:tryptophan synthase activity"/>
    <property type="evidence" value="ECO:0007669"/>
    <property type="project" value="UniProtKB-UniRule"/>
</dbReference>
<dbReference type="CDD" id="cd06446">
    <property type="entry name" value="Trp-synth_B"/>
    <property type="match status" value="1"/>
</dbReference>
<dbReference type="FunFam" id="3.40.50.1100:FF:000001">
    <property type="entry name" value="Tryptophan synthase beta chain"/>
    <property type="match status" value="1"/>
</dbReference>
<dbReference type="FunFam" id="3.40.50.1100:FF:000004">
    <property type="entry name" value="Tryptophan synthase beta chain"/>
    <property type="match status" value="1"/>
</dbReference>
<dbReference type="Gene3D" id="3.40.50.1100">
    <property type="match status" value="2"/>
</dbReference>
<dbReference type="HAMAP" id="MF_00133">
    <property type="entry name" value="Trp_synth_beta"/>
    <property type="match status" value="1"/>
</dbReference>
<dbReference type="InterPro" id="IPR006653">
    <property type="entry name" value="Trp_synth_b_CS"/>
</dbReference>
<dbReference type="InterPro" id="IPR006654">
    <property type="entry name" value="Trp_synth_beta"/>
</dbReference>
<dbReference type="InterPro" id="IPR023026">
    <property type="entry name" value="Trp_synth_beta/beta-like"/>
</dbReference>
<dbReference type="InterPro" id="IPR001926">
    <property type="entry name" value="TrpB-like_PALP"/>
</dbReference>
<dbReference type="InterPro" id="IPR036052">
    <property type="entry name" value="TrpB-like_PALP_sf"/>
</dbReference>
<dbReference type="NCBIfam" id="TIGR00263">
    <property type="entry name" value="trpB"/>
    <property type="match status" value="1"/>
</dbReference>
<dbReference type="PANTHER" id="PTHR48077:SF3">
    <property type="entry name" value="TRYPTOPHAN SYNTHASE"/>
    <property type="match status" value="1"/>
</dbReference>
<dbReference type="PANTHER" id="PTHR48077">
    <property type="entry name" value="TRYPTOPHAN SYNTHASE-RELATED"/>
    <property type="match status" value="1"/>
</dbReference>
<dbReference type="Pfam" id="PF00291">
    <property type="entry name" value="PALP"/>
    <property type="match status" value="1"/>
</dbReference>
<dbReference type="PIRSF" id="PIRSF001413">
    <property type="entry name" value="Trp_syn_beta"/>
    <property type="match status" value="1"/>
</dbReference>
<dbReference type="SUPFAM" id="SSF53686">
    <property type="entry name" value="Tryptophan synthase beta subunit-like PLP-dependent enzymes"/>
    <property type="match status" value="1"/>
</dbReference>
<dbReference type="PROSITE" id="PS00168">
    <property type="entry name" value="TRP_SYNTHASE_BETA"/>
    <property type="match status" value="1"/>
</dbReference>
<evidence type="ECO:0000255" key="1">
    <source>
        <dbReference type="HAMAP-Rule" id="MF_00133"/>
    </source>
</evidence>
<accession>B7NVN1</accession>
<proteinExistence type="inferred from homology"/>
<feature type="chain" id="PRO_1000117754" description="Tryptophan synthase beta chain">
    <location>
        <begin position="1"/>
        <end position="397"/>
    </location>
</feature>
<feature type="modified residue" description="N6-(pyridoxal phosphate)lysine" evidence="1">
    <location>
        <position position="87"/>
    </location>
</feature>
<gene>
    <name evidence="1" type="primary">trpB</name>
    <name type="ordered locus">ECIAI39_1598</name>
</gene>
<comment type="function">
    <text evidence="1">The beta subunit is responsible for the synthesis of L-tryptophan from indole and L-serine.</text>
</comment>
<comment type="catalytic activity">
    <reaction evidence="1">
        <text>(1S,2R)-1-C-(indol-3-yl)glycerol 3-phosphate + L-serine = D-glyceraldehyde 3-phosphate + L-tryptophan + H2O</text>
        <dbReference type="Rhea" id="RHEA:10532"/>
        <dbReference type="ChEBI" id="CHEBI:15377"/>
        <dbReference type="ChEBI" id="CHEBI:33384"/>
        <dbReference type="ChEBI" id="CHEBI:57912"/>
        <dbReference type="ChEBI" id="CHEBI:58866"/>
        <dbReference type="ChEBI" id="CHEBI:59776"/>
        <dbReference type="EC" id="4.2.1.20"/>
    </reaction>
</comment>
<comment type="cofactor">
    <cofactor evidence="1">
        <name>pyridoxal 5'-phosphate</name>
        <dbReference type="ChEBI" id="CHEBI:597326"/>
    </cofactor>
</comment>
<comment type="pathway">
    <text evidence="1">Amino-acid biosynthesis; L-tryptophan biosynthesis; L-tryptophan from chorismate: step 5/5.</text>
</comment>
<comment type="subunit">
    <text evidence="1">Tetramer of two alpha and two beta chains.</text>
</comment>
<comment type="similarity">
    <text evidence="1">Belongs to the TrpB family.</text>
</comment>
<sequence length="397" mass="42998">MTTLLNPYFGEFGGMYVPQILMPALRQLEEAFVSAQKDPEFQAQFNDLLKNYAGRPTALTKCQNITAGTNTTLYLKREDLLHGGAHKTNQVLGQALLAKRMGKTEIIAETGAGQHGVASALASALLGLKCRIYMGAKDVERQSPNVFRMRLMGAEVIPVHSGSATLKDACNEALRDWSGSYETAHYMLGTAAGPHPYPTIVREFQRMIGEETKAQILEREGRLPDAVIACVGGGSNAIGMFADFINETDVGLIGVEPGGHGIETGEHGAPLKHGRVGIYFGMKAPMMQTEDGQIEESYSISAGLDFPSVGPQHAYLNSTGRADYVSITDDEALEAFKTLCLHEGIIPALESSHALAHALKMMRENPEKEQLLVVNLSGRGDKDIFTVHDILKARGEI</sequence>
<organism>
    <name type="scientific">Escherichia coli O7:K1 (strain IAI39 / ExPEC)</name>
    <dbReference type="NCBI Taxonomy" id="585057"/>
    <lineage>
        <taxon>Bacteria</taxon>
        <taxon>Pseudomonadati</taxon>
        <taxon>Pseudomonadota</taxon>
        <taxon>Gammaproteobacteria</taxon>
        <taxon>Enterobacterales</taxon>
        <taxon>Enterobacteriaceae</taxon>
        <taxon>Escherichia</taxon>
    </lineage>
</organism>
<protein>
    <recommendedName>
        <fullName evidence="1">Tryptophan synthase beta chain</fullName>
        <ecNumber evidence="1">4.2.1.20</ecNumber>
    </recommendedName>
</protein>
<keyword id="KW-0028">Amino-acid biosynthesis</keyword>
<keyword id="KW-0057">Aromatic amino acid biosynthesis</keyword>
<keyword id="KW-0456">Lyase</keyword>
<keyword id="KW-0663">Pyridoxal phosphate</keyword>
<keyword id="KW-0822">Tryptophan biosynthesis</keyword>
<reference key="1">
    <citation type="journal article" date="2009" name="PLoS Genet.">
        <title>Organised genome dynamics in the Escherichia coli species results in highly diverse adaptive paths.</title>
        <authorList>
            <person name="Touchon M."/>
            <person name="Hoede C."/>
            <person name="Tenaillon O."/>
            <person name="Barbe V."/>
            <person name="Baeriswyl S."/>
            <person name="Bidet P."/>
            <person name="Bingen E."/>
            <person name="Bonacorsi S."/>
            <person name="Bouchier C."/>
            <person name="Bouvet O."/>
            <person name="Calteau A."/>
            <person name="Chiapello H."/>
            <person name="Clermont O."/>
            <person name="Cruveiller S."/>
            <person name="Danchin A."/>
            <person name="Diard M."/>
            <person name="Dossat C."/>
            <person name="Karoui M.E."/>
            <person name="Frapy E."/>
            <person name="Garry L."/>
            <person name="Ghigo J.M."/>
            <person name="Gilles A.M."/>
            <person name="Johnson J."/>
            <person name="Le Bouguenec C."/>
            <person name="Lescat M."/>
            <person name="Mangenot S."/>
            <person name="Martinez-Jehanne V."/>
            <person name="Matic I."/>
            <person name="Nassif X."/>
            <person name="Oztas S."/>
            <person name="Petit M.A."/>
            <person name="Pichon C."/>
            <person name="Rouy Z."/>
            <person name="Ruf C.S."/>
            <person name="Schneider D."/>
            <person name="Tourret J."/>
            <person name="Vacherie B."/>
            <person name="Vallenet D."/>
            <person name="Medigue C."/>
            <person name="Rocha E.P.C."/>
            <person name="Denamur E."/>
        </authorList>
    </citation>
    <scope>NUCLEOTIDE SEQUENCE [LARGE SCALE GENOMIC DNA]</scope>
    <source>
        <strain>IAI39 / ExPEC</strain>
    </source>
</reference>